<protein>
    <recommendedName>
        <fullName evidence="1">Ribosomal RNA small subunit methyltransferase H</fullName>
        <ecNumber evidence="1">2.1.1.199</ecNumber>
    </recommendedName>
    <alternativeName>
        <fullName evidence="1">16S rRNA m(4)C1402 methyltransferase</fullName>
    </alternativeName>
    <alternativeName>
        <fullName evidence="1">rRNA (cytosine-N(4)-)-methyltransferase RsmH</fullName>
    </alternativeName>
</protein>
<reference key="1">
    <citation type="journal article" date="2004" name="Nat. Biotechnol.">
        <title>Complete sequence and comparative genome analysis of the dairy bacterium Streptococcus thermophilus.</title>
        <authorList>
            <person name="Bolotin A."/>
            <person name="Quinquis B."/>
            <person name="Renault P."/>
            <person name="Sorokin A."/>
            <person name="Ehrlich S.D."/>
            <person name="Kulakauskas S."/>
            <person name="Lapidus A."/>
            <person name="Goltsman E."/>
            <person name="Mazur M."/>
            <person name="Pusch G.D."/>
            <person name="Fonstein M."/>
            <person name="Overbeek R."/>
            <person name="Kyprides N."/>
            <person name="Purnelle B."/>
            <person name="Prozzi D."/>
            <person name="Ngui K."/>
            <person name="Masuy D."/>
            <person name="Hancy F."/>
            <person name="Burteau S."/>
            <person name="Boutry M."/>
            <person name="Delcour J."/>
            <person name="Goffeau A."/>
            <person name="Hols P."/>
        </authorList>
    </citation>
    <scope>NUCLEOTIDE SEQUENCE [LARGE SCALE GENOMIC DNA]</scope>
    <source>
        <strain>CNRZ 1066</strain>
    </source>
</reference>
<organism>
    <name type="scientific">Streptococcus thermophilus (strain CNRZ 1066)</name>
    <dbReference type="NCBI Taxonomy" id="299768"/>
    <lineage>
        <taxon>Bacteria</taxon>
        <taxon>Bacillati</taxon>
        <taxon>Bacillota</taxon>
        <taxon>Bacilli</taxon>
        <taxon>Lactobacillales</taxon>
        <taxon>Streptococcaceae</taxon>
        <taxon>Streptococcus</taxon>
    </lineage>
</organism>
<sequence length="316" mass="35759">MTNEFHHVTVLLHETVDMLDIKPDGIYVDATLGGAGHSSYLLSQLSEKGHLYCFDQDQKAIDNAQVRLKDYIDKGMVTFIKDNFRNLKSNLEALGVSEIDGILYDLGVSSPQLDERERGFSYKQDAKLDMRMNEEASLTAYDVVNTYPYNDLVRIFFKYGEDKFSKQIARKIEQARQVKPIETTTELAEIIKSAKPAKELKKKGHPAKQIFQAIRIEVNDELGAADESIQEALDLLAVDGRISVITFHSLEDRLTKQLFKEASTVDVPKGLPFIPEDLQPKVALVNRKPILPSQEELEANNRSHSAKLRVAKKIRK</sequence>
<feature type="chain" id="PRO_0000108725" description="Ribosomal RNA small subunit methyltransferase H">
    <location>
        <begin position="1"/>
        <end position="316"/>
    </location>
</feature>
<feature type="binding site" evidence="1">
    <location>
        <begin position="35"/>
        <end position="37"/>
    </location>
    <ligand>
        <name>S-adenosyl-L-methionine</name>
        <dbReference type="ChEBI" id="CHEBI:59789"/>
    </ligand>
</feature>
<feature type="binding site" evidence="1">
    <location>
        <position position="55"/>
    </location>
    <ligand>
        <name>S-adenosyl-L-methionine</name>
        <dbReference type="ChEBI" id="CHEBI:59789"/>
    </ligand>
</feature>
<feature type="binding site" evidence="1">
    <location>
        <position position="84"/>
    </location>
    <ligand>
        <name>S-adenosyl-L-methionine</name>
        <dbReference type="ChEBI" id="CHEBI:59789"/>
    </ligand>
</feature>
<feature type="binding site" evidence="1">
    <location>
        <position position="105"/>
    </location>
    <ligand>
        <name>S-adenosyl-L-methionine</name>
        <dbReference type="ChEBI" id="CHEBI:59789"/>
    </ligand>
</feature>
<feature type="binding site" evidence="1">
    <location>
        <position position="112"/>
    </location>
    <ligand>
        <name>S-adenosyl-L-methionine</name>
        <dbReference type="ChEBI" id="CHEBI:59789"/>
    </ligand>
</feature>
<keyword id="KW-0963">Cytoplasm</keyword>
<keyword id="KW-0489">Methyltransferase</keyword>
<keyword id="KW-0698">rRNA processing</keyword>
<keyword id="KW-0949">S-adenosyl-L-methionine</keyword>
<keyword id="KW-0808">Transferase</keyword>
<gene>
    <name evidence="1" type="primary">rsmH</name>
    <name type="synonym">mraW</name>
    <name type="ordered locus">str1703</name>
</gene>
<evidence type="ECO:0000255" key="1">
    <source>
        <dbReference type="HAMAP-Rule" id="MF_01007"/>
    </source>
</evidence>
<evidence type="ECO:0000305" key="2"/>
<proteinExistence type="inferred from homology"/>
<dbReference type="EC" id="2.1.1.199" evidence="1"/>
<dbReference type="EMBL" id="CP000024">
    <property type="protein sequence ID" value="AAV63223.1"/>
    <property type="status" value="ALT_INIT"/>
    <property type="molecule type" value="Genomic_DNA"/>
</dbReference>
<dbReference type="RefSeq" id="WP_002888254.1">
    <property type="nucleotide sequence ID" value="NC_006449.1"/>
</dbReference>
<dbReference type="SMR" id="Q5LY91"/>
<dbReference type="KEGG" id="stc:str1703"/>
<dbReference type="HOGENOM" id="CLU_038422_2_0_9"/>
<dbReference type="GO" id="GO:0005737">
    <property type="term" value="C:cytoplasm"/>
    <property type="evidence" value="ECO:0007669"/>
    <property type="project" value="UniProtKB-SubCell"/>
</dbReference>
<dbReference type="GO" id="GO:0071424">
    <property type="term" value="F:rRNA (cytosine-N4-)-methyltransferase activity"/>
    <property type="evidence" value="ECO:0007669"/>
    <property type="project" value="UniProtKB-UniRule"/>
</dbReference>
<dbReference type="GO" id="GO:0070475">
    <property type="term" value="P:rRNA base methylation"/>
    <property type="evidence" value="ECO:0007669"/>
    <property type="project" value="UniProtKB-UniRule"/>
</dbReference>
<dbReference type="FunFam" id="1.10.150.170:FF:000001">
    <property type="entry name" value="Ribosomal RNA small subunit methyltransferase H"/>
    <property type="match status" value="1"/>
</dbReference>
<dbReference type="Gene3D" id="1.10.150.170">
    <property type="entry name" value="Putative methyltransferase TM0872, insert domain"/>
    <property type="match status" value="1"/>
</dbReference>
<dbReference type="Gene3D" id="3.40.50.150">
    <property type="entry name" value="Vaccinia Virus protein VP39"/>
    <property type="match status" value="1"/>
</dbReference>
<dbReference type="HAMAP" id="MF_01007">
    <property type="entry name" value="16SrRNA_methyltr_H"/>
    <property type="match status" value="1"/>
</dbReference>
<dbReference type="InterPro" id="IPR002903">
    <property type="entry name" value="RsmH"/>
</dbReference>
<dbReference type="InterPro" id="IPR023397">
    <property type="entry name" value="SAM-dep_MeTrfase_MraW_recog"/>
</dbReference>
<dbReference type="InterPro" id="IPR029063">
    <property type="entry name" value="SAM-dependent_MTases_sf"/>
</dbReference>
<dbReference type="NCBIfam" id="TIGR00006">
    <property type="entry name" value="16S rRNA (cytosine(1402)-N(4))-methyltransferase RsmH"/>
    <property type="match status" value="1"/>
</dbReference>
<dbReference type="PANTHER" id="PTHR11265:SF0">
    <property type="entry name" value="12S RRNA N4-METHYLCYTIDINE METHYLTRANSFERASE"/>
    <property type="match status" value="1"/>
</dbReference>
<dbReference type="PANTHER" id="PTHR11265">
    <property type="entry name" value="S-ADENOSYL-METHYLTRANSFERASE MRAW"/>
    <property type="match status" value="1"/>
</dbReference>
<dbReference type="Pfam" id="PF01795">
    <property type="entry name" value="Methyltransf_5"/>
    <property type="match status" value="1"/>
</dbReference>
<dbReference type="PIRSF" id="PIRSF004486">
    <property type="entry name" value="MraW"/>
    <property type="match status" value="1"/>
</dbReference>
<dbReference type="SUPFAM" id="SSF81799">
    <property type="entry name" value="Putative methyltransferase TM0872, insert domain"/>
    <property type="match status" value="1"/>
</dbReference>
<dbReference type="SUPFAM" id="SSF53335">
    <property type="entry name" value="S-adenosyl-L-methionine-dependent methyltransferases"/>
    <property type="match status" value="1"/>
</dbReference>
<name>RSMH_STRT1</name>
<comment type="function">
    <text evidence="1">Specifically methylates the N4 position of cytidine in position 1402 (C1402) of 16S rRNA.</text>
</comment>
<comment type="catalytic activity">
    <reaction evidence="1">
        <text>cytidine(1402) in 16S rRNA + S-adenosyl-L-methionine = N(4)-methylcytidine(1402) in 16S rRNA + S-adenosyl-L-homocysteine + H(+)</text>
        <dbReference type="Rhea" id="RHEA:42928"/>
        <dbReference type="Rhea" id="RHEA-COMP:10286"/>
        <dbReference type="Rhea" id="RHEA-COMP:10287"/>
        <dbReference type="ChEBI" id="CHEBI:15378"/>
        <dbReference type="ChEBI" id="CHEBI:57856"/>
        <dbReference type="ChEBI" id="CHEBI:59789"/>
        <dbReference type="ChEBI" id="CHEBI:74506"/>
        <dbReference type="ChEBI" id="CHEBI:82748"/>
        <dbReference type="EC" id="2.1.1.199"/>
    </reaction>
</comment>
<comment type="subcellular location">
    <subcellularLocation>
        <location evidence="1">Cytoplasm</location>
    </subcellularLocation>
</comment>
<comment type="similarity">
    <text evidence="1">Belongs to the methyltransferase superfamily. RsmH family.</text>
</comment>
<comment type="sequence caution" evidence="2">
    <conflict type="erroneous initiation">
        <sequence resource="EMBL-CDS" id="AAV63223"/>
    </conflict>
</comment>
<accession>Q5LY91</accession>